<gene>
    <name evidence="1" type="primary">thyA</name>
    <name type="ordered locus">Ent638_3269</name>
</gene>
<name>TYSY_ENT38</name>
<keyword id="KW-0963">Cytoplasm</keyword>
<keyword id="KW-0489">Methyltransferase</keyword>
<keyword id="KW-0545">Nucleotide biosynthesis</keyword>
<keyword id="KW-0808">Transferase</keyword>
<feature type="chain" id="PRO_1000057061" description="Thymidylate synthase">
    <location>
        <begin position="1"/>
        <end position="264"/>
    </location>
</feature>
<feature type="active site" description="Nucleophile" evidence="1">
    <location>
        <position position="146"/>
    </location>
</feature>
<feature type="binding site" description="in other chain" evidence="1">
    <location>
        <position position="21"/>
    </location>
    <ligand>
        <name>dUMP</name>
        <dbReference type="ChEBI" id="CHEBI:246422"/>
        <note>ligand shared between dimeric partners</note>
    </ligand>
</feature>
<feature type="binding site" evidence="1">
    <location>
        <position position="51"/>
    </location>
    <ligand>
        <name>(6R)-5,10-methylene-5,6,7,8-tetrahydrofolate</name>
        <dbReference type="ChEBI" id="CHEBI:15636"/>
    </ligand>
</feature>
<feature type="binding site" evidence="1">
    <location>
        <begin position="126"/>
        <end position="127"/>
    </location>
    <ligand>
        <name>dUMP</name>
        <dbReference type="ChEBI" id="CHEBI:246422"/>
        <note>ligand shared between dimeric partners</note>
    </ligand>
</feature>
<feature type="binding site" description="in other chain" evidence="1">
    <location>
        <begin position="166"/>
        <end position="169"/>
    </location>
    <ligand>
        <name>dUMP</name>
        <dbReference type="ChEBI" id="CHEBI:246422"/>
        <note>ligand shared between dimeric partners</note>
    </ligand>
</feature>
<feature type="binding site" evidence="1">
    <location>
        <position position="169"/>
    </location>
    <ligand>
        <name>(6R)-5,10-methylene-5,6,7,8-tetrahydrofolate</name>
        <dbReference type="ChEBI" id="CHEBI:15636"/>
    </ligand>
</feature>
<feature type="binding site" description="in other chain" evidence="1">
    <location>
        <position position="177"/>
    </location>
    <ligand>
        <name>dUMP</name>
        <dbReference type="ChEBI" id="CHEBI:246422"/>
        <note>ligand shared between dimeric partners</note>
    </ligand>
</feature>
<feature type="binding site" description="in other chain" evidence="1">
    <location>
        <begin position="207"/>
        <end position="209"/>
    </location>
    <ligand>
        <name>dUMP</name>
        <dbReference type="ChEBI" id="CHEBI:246422"/>
        <note>ligand shared between dimeric partners</note>
    </ligand>
</feature>
<feature type="binding site" evidence="1">
    <location>
        <position position="263"/>
    </location>
    <ligand>
        <name>(6R)-5,10-methylene-5,6,7,8-tetrahydrofolate</name>
        <dbReference type="ChEBI" id="CHEBI:15636"/>
    </ligand>
</feature>
<protein>
    <recommendedName>
        <fullName evidence="1">Thymidylate synthase</fullName>
        <shortName evidence="1">TS</shortName>
        <shortName evidence="1">TSase</shortName>
        <ecNumber evidence="1">2.1.1.45</ecNumber>
    </recommendedName>
</protein>
<evidence type="ECO:0000255" key="1">
    <source>
        <dbReference type="HAMAP-Rule" id="MF_00008"/>
    </source>
</evidence>
<dbReference type="EC" id="2.1.1.45" evidence="1"/>
<dbReference type="EMBL" id="CP000653">
    <property type="protein sequence ID" value="ABP61933.1"/>
    <property type="molecule type" value="Genomic_DNA"/>
</dbReference>
<dbReference type="RefSeq" id="WP_015960262.1">
    <property type="nucleotide sequence ID" value="NC_009436.1"/>
</dbReference>
<dbReference type="SMR" id="A4WE03"/>
<dbReference type="STRING" id="399742.Ent638_3269"/>
<dbReference type="KEGG" id="ent:Ent638_3269"/>
<dbReference type="eggNOG" id="COG0207">
    <property type="taxonomic scope" value="Bacteria"/>
</dbReference>
<dbReference type="HOGENOM" id="CLU_021669_0_0_6"/>
<dbReference type="OrthoDB" id="9774633at2"/>
<dbReference type="UniPathway" id="UPA00575"/>
<dbReference type="Proteomes" id="UP000000230">
    <property type="component" value="Chromosome"/>
</dbReference>
<dbReference type="GO" id="GO:0005829">
    <property type="term" value="C:cytosol"/>
    <property type="evidence" value="ECO:0007669"/>
    <property type="project" value="TreeGrafter"/>
</dbReference>
<dbReference type="GO" id="GO:0004799">
    <property type="term" value="F:thymidylate synthase activity"/>
    <property type="evidence" value="ECO:0007669"/>
    <property type="project" value="UniProtKB-UniRule"/>
</dbReference>
<dbReference type="GO" id="GO:0006231">
    <property type="term" value="P:dTMP biosynthetic process"/>
    <property type="evidence" value="ECO:0007669"/>
    <property type="project" value="UniProtKB-UniRule"/>
</dbReference>
<dbReference type="GO" id="GO:0006235">
    <property type="term" value="P:dTTP biosynthetic process"/>
    <property type="evidence" value="ECO:0007669"/>
    <property type="project" value="UniProtKB-UniRule"/>
</dbReference>
<dbReference type="GO" id="GO:0032259">
    <property type="term" value="P:methylation"/>
    <property type="evidence" value="ECO:0007669"/>
    <property type="project" value="UniProtKB-KW"/>
</dbReference>
<dbReference type="CDD" id="cd00351">
    <property type="entry name" value="TS_Pyrimidine_HMase"/>
    <property type="match status" value="1"/>
</dbReference>
<dbReference type="FunFam" id="3.30.572.10:FF:000001">
    <property type="entry name" value="Thymidylate synthase"/>
    <property type="match status" value="1"/>
</dbReference>
<dbReference type="Gene3D" id="3.30.572.10">
    <property type="entry name" value="Thymidylate synthase/dCMP hydroxymethylase domain"/>
    <property type="match status" value="1"/>
</dbReference>
<dbReference type="HAMAP" id="MF_00008">
    <property type="entry name" value="Thymidy_synth_bact"/>
    <property type="match status" value="1"/>
</dbReference>
<dbReference type="InterPro" id="IPR045097">
    <property type="entry name" value="Thymidate_synth/dCMP_Mease"/>
</dbReference>
<dbReference type="InterPro" id="IPR023451">
    <property type="entry name" value="Thymidate_synth/dCMP_Mease_dom"/>
</dbReference>
<dbReference type="InterPro" id="IPR036926">
    <property type="entry name" value="Thymidate_synth/dCMP_Mease_sf"/>
</dbReference>
<dbReference type="InterPro" id="IPR000398">
    <property type="entry name" value="Thymidylate_synthase"/>
</dbReference>
<dbReference type="InterPro" id="IPR020940">
    <property type="entry name" value="Thymidylate_synthase_AS"/>
</dbReference>
<dbReference type="NCBIfam" id="NF002497">
    <property type="entry name" value="PRK01827.1-3"/>
    <property type="match status" value="1"/>
</dbReference>
<dbReference type="NCBIfam" id="NF002499">
    <property type="entry name" value="PRK01827.1-5"/>
    <property type="match status" value="1"/>
</dbReference>
<dbReference type="NCBIfam" id="TIGR03284">
    <property type="entry name" value="thym_sym"/>
    <property type="match status" value="2"/>
</dbReference>
<dbReference type="PANTHER" id="PTHR11548:SF9">
    <property type="entry name" value="THYMIDYLATE SYNTHASE"/>
    <property type="match status" value="1"/>
</dbReference>
<dbReference type="PANTHER" id="PTHR11548">
    <property type="entry name" value="THYMIDYLATE SYNTHASE 1"/>
    <property type="match status" value="1"/>
</dbReference>
<dbReference type="Pfam" id="PF00303">
    <property type="entry name" value="Thymidylat_synt"/>
    <property type="match status" value="1"/>
</dbReference>
<dbReference type="PRINTS" id="PR00108">
    <property type="entry name" value="THYMDSNTHASE"/>
</dbReference>
<dbReference type="SUPFAM" id="SSF55831">
    <property type="entry name" value="Thymidylate synthase/dCMP hydroxymethylase"/>
    <property type="match status" value="1"/>
</dbReference>
<dbReference type="PROSITE" id="PS00091">
    <property type="entry name" value="THYMIDYLATE_SYNTHASE"/>
    <property type="match status" value="1"/>
</dbReference>
<proteinExistence type="inferred from homology"/>
<comment type="function">
    <text evidence="1">Catalyzes the reductive methylation of 2'-deoxyuridine-5'-monophosphate (dUMP) to 2'-deoxythymidine-5'-monophosphate (dTMP) while utilizing 5,10-methylenetetrahydrofolate (mTHF) as the methyl donor and reductant in the reaction, yielding dihydrofolate (DHF) as a by-product. This enzymatic reaction provides an intracellular de novo source of dTMP, an essential precursor for DNA biosynthesis.</text>
</comment>
<comment type="catalytic activity">
    <reaction evidence="1">
        <text>dUMP + (6R)-5,10-methylene-5,6,7,8-tetrahydrofolate = 7,8-dihydrofolate + dTMP</text>
        <dbReference type="Rhea" id="RHEA:12104"/>
        <dbReference type="ChEBI" id="CHEBI:15636"/>
        <dbReference type="ChEBI" id="CHEBI:57451"/>
        <dbReference type="ChEBI" id="CHEBI:63528"/>
        <dbReference type="ChEBI" id="CHEBI:246422"/>
        <dbReference type="EC" id="2.1.1.45"/>
    </reaction>
</comment>
<comment type="pathway">
    <text evidence="1">Pyrimidine metabolism; dTTP biosynthesis.</text>
</comment>
<comment type="subunit">
    <text evidence="1">Homodimer.</text>
</comment>
<comment type="subcellular location">
    <subcellularLocation>
        <location evidence="1">Cytoplasm</location>
    </subcellularLocation>
</comment>
<comment type="similarity">
    <text evidence="1">Belongs to the thymidylate synthase family. Bacterial-type ThyA subfamily.</text>
</comment>
<reference key="1">
    <citation type="journal article" date="2010" name="PLoS Genet.">
        <title>Genome sequence of the plant growth promoting endophytic bacterium Enterobacter sp. 638.</title>
        <authorList>
            <person name="Taghavi S."/>
            <person name="van der Lelie D."/>
            <person name="Hoffman A."/>
            <person name="Zhang Y.B."/>
            <person name="Walla M.D."/>
            <person name="Vangronsveld J."/>
            <person name="Newman L."/>
            <person name="Monchy S."/>
        </authorList>
    </citation>
    <scope>NUCLEOTIDE SEQUENCE [LARGE SCALE GENOMIC DNA]</scope>
    <source>
        <strain>638</strain>
    </source>
</reference>
<sequence length="264" mass="30450">MKQYLELMKKVLDEGTPKNDRTGTGTLSIFGHQMRFNLQEGFPLVTTKRCHLRSIIHELLWFLQGDTNVAYLRENNVSIWDEWADENGNLGPVYGHQWRAWPTPDGRHIDQITTVLNQLKNDPDSRRIIVSAWNVGELDKMALAPCHAFFQFYVADGKLSCQLYQRSCDVFLGLPFNIASYALLVHMMAQQCDLEVGDFVWTGGDTHLYSNHMEQTHLQLTREPRALPKLVIKRKPESIFDYRFEDFEIEGYDPHPGIKAPVAI</sequence>
<accession>A4WE03</accession>
<organism>
    <name type="scientific">Enterobacter sp. (strain 638)</name>
    <dbReference type="NCBI Taxonomy" id="399742"/>
    <lineage>
        <taxon>Bacteria</taxon>
        <taxon>Pseudomonadati</taxon>
        <taxon>Pseudomonadota</taxon>
        <taxon>Gammaproteobacteria</taxon>
        <taxon>Enterobacterales</taxon>
        <taxon>Enterobacteriaceae</taxon>
        <taxon>Enterobacter</taxon>
    </lineage>
</organism>